<evidence type="ECO:0000255" key="1">
    <source>
        <dbReference type="HAMAP-Rule" id="MF_00501"/>
    </source>
</evidence>
<evidence type="ECO:0000305" key="2"/>
<accession>C5C1S7</accession>
<dbReference type="EMBL" id="CP001618">
    <property type="protein sequence ID" value="ACQ79545.1"/>
    <property type="molecule type" value="Genomic_DNA"/>
</dbReference>
<dbReference type="RefSeq" id="WP_015881785.1">
    <property type="nucleotide sequence ID" value="NC_012669.1"/>
</dbReference>
<dbReference type="SMR" id="C5C1S7"/>
<dbReference type="STRING" id="471853.Bcav_1285"/>
<dbReference type="KEGG" id="bcv:Bcav_1285"/>
<dbReference type="eggNOG" id="COG0254">
    <property type="taxonomic scope" value="Bacteria"/>
</dbReference>
<dbReference type="HOGENOM" id="CLU_114306_4_0_11"/>
<dbReference type="OrthoDB" id="9803251at2"/>
<dbReference type="Proteomes" id="UP000007962">
    <property type="component" value="Chromosome"/>
</dbReference>
<dbReference type="GO" id="GO:1990904">
    <property type="term" value="C:ribonucleoprotein complex"/>
    <property type="evidence" value="ECO:0007669"/>
    <property type="project" value="UniProtKB-KW"/>
</dbReference>
<dbReference type="GO" id="GO:0005840">
    <property type="term" value="C:ribosome"/>
    <property type="evidence" value="ECO:0007669"/>
    <property type="project" value="UniProtKB-KW"/>
</dbReference>
<dbReference type="GO" id="GO:0046872">
    <property type="term" value="F:metal ion binding"/>
    <property type="evidence" value="ECO:0007669"/>
    <property type="project" value="UniProtKB-KW"/>
</dbReference>
<dbReference type="GO" id="GO:0019843">
    <property type="term" value="F:rRNA binding"/>
    <property type="evidence" value="ECO:0007669"/>
    <property type="project" value="UniProtKB-KW"/>
</dbReference>
<dbReference type="GO" id="GO:0003735">
    <property type="term" value="F:structural constituent of ribosome"/>
    <property type="evidence" value="ECO:0007669"/>
    <property type="project" value="InterPro"/>
</dbReference>
<dbReference type="GO" id="GO:0006412">
    <property type="term" value="P:translation"/>
    <property type="evidence" value="ECO:0007669"/>
    <property type="project" value="UniProtKB-UniRule"/>
</dbReference>
<dbReference type="Gene3D" id="4.10.830.30">
    <property type="entry name" value="Ribosomal protein L31"/>
    <property type="match status" value="1"/>
</dbReference>
<dbReference type="HAMAP" id="MF_00501">
    <property type="entry name" value="Ribosomal_bL31_1"/>
    <property type="match status" value="1"/>
</dbReference>
<dbReference type="InterPro" id="IPR034704">
    <property type="entry name" value="Ribosomal_bL28/bL31-like_sf"/>
</dbReference>
<dbReference type="InterPro" id="IPR002150">
    <property type="entry name" value="Ribosomal_bL31"/>
</dbReference>
<dbReference type="InterPro" id="IPR027491">
    <property type="entry name" value="Ribosomal_bL31_A"/>
</dbReference>
<dbReference type="InterPro" id="IPR042105">
    <property type="entry name" value="Ribosomal_bL31_sf"/>
</dbReference>
<dbReference type="NCBIfam" id="TIGR00105">
    <property type="entry name" value="L31"/>
    <property type="match status" value="1"/>
</dbReference>
<dbReference type="NCBIfam" id="NF000612">
    <property type="entry name" value="PRK00019.1"/>
    <property type="match status" value="1"/>
</dbReference>
<dbReference type="NCBIfam" id="NF001809">
    <property type="entry name" value="PRK00528.1"/>
    <property type="match status" value="1"/>
</dbReference>
<dbReference type="PANTHER" id="PTHR33280">
    <property type="entry name" value="50S RIBOSOMAL PROTEIN L31, CHLOROPLASTIC"/>
    <property type="match status" value="1"/>
</dbReference>
<dbReference type="PANTHER" id="PTHR33280:SF1">
    <property type="entry name" value="LARGE RIBOSOMAL SUBUNIT PROTEIN BL31C"/>
    <property type="match status" value="1"/>
</dbReference>
<dbReference type="Pfam" id="PF01197">
    <property type="entry name" value="Ribosomal_L31"/>
    <property type="match status" value="1"/>
</dbReference>
<dbReference type="PRINTS" id="PR01249">
    <property type="entry name" value="RIBOSOMALL31"/>
</dbReference>
<dbReference type="SUPFAM" id="SSF143800">
    <property type="entry name" value="L28p-like"/>
    <property type="match status" value="1"/>
</dbReference>
<dbReference type="PROSITE" id="PS01143">
    <property type="entry name" value="RIBOSOMAL_L31"/>
    <property type="match status" value="1"/>
</dbReference>
<gene>
    <name evidence="1" type="primary">rpmE</name>
    <name type="ordered locus">Bcav_1285</name>
</gene>
<name>RL31_BEUC1</name>
<organism>
    <name type="scientific">Beutenbergia cavernae (strain ATCC BAA-8 / DSM 12333 / CCUG 43141 / JCM 11478 / NBRC 16432 / NCIMB 13614 / HKI 0122)</name>
    <dbReference type="NCBI Taxonomy" id="471853"/>
    <lineage>
        <taxon>Bacteria</taxon>
        <taxon>Bacillati</taxon>
        <taxon>Actinomycetota</taxon>
        <taxon>Actinomycetes</taxon>
        <taxon>Micrococcales</taxon>
        <taxon>Beutenbergiaceae</taxon>
        <taxon>Beutenbergia</taxon>
    </lineage>
</organism>
<protein>
    <recommendedName>
        <fullName evidence="1">Large ribosomal subunit protein bL31</fullName>
    </recommendedName>
    <alternativeName>
        <fullName evidence="2">50S ribosomal protein L31</fullName>
    </alternativeName>
</protein>
<keyword id="KW-0479">Metal-binding</keyword>
<keyword id="KW-1185">Reference proteome</keyword>
<keyword id="KW-0687">Ribonucleoprotein</keyword>
<keyword id="KW-0689">Ribosomal protein</keyword>
<keyword id="KW-0694">RNA-binding</keyword>
<keyword id="KW-0699">rRNA-binding</keyword>
<keyword id="KW-0862">Zinc</keyword>
<reference key="1">
    <citation type="journal article" date="2009" name="Stand. Genomic Sci.">
        <title>Complete genome sequence of Beutenbergia cavernae type strain (HKI 0122).</title>
        <authorList>
            <person name="Land M."/>
            <person name="Pukall R."/>
            <person name="Abt B."/>
            <person name="Goker M."/>
            <person name="Rohde M."/>
            <person name="Glavina Del Rio T."/>
            <person name="Tice H."/>
            <person name="Copeland A."/>
            <person name="Cheng J.F."/>
            <person name="Lucas S."/>
            <person name="Chen F."/>
            <person name="Nolan M."/>
            <person name="Bruce D."/>
            <person name="Goodwin L."/>
            <person name="Pitluck S."/>
            <person name="Ivanova N."/>
            <person name="Mavromatis K."/>
            <person name="Ovchinnikova G."/>
            <person name="Pati A."/>
            <person name="Chen A."/>
            <person name="Palaniappan K."/>
            <person name="Hauser L."/>
            <person name="Chang Y.J."/>
            <person name="Jefferies C.C."/>
            <person name="Saunders E."/>
            <person name="Brettin T."/>
            <person name="Detter J.C."/>
            <person name="Han C."/>
            <person name="Chain P."/>
            <person name="Bristow J."/>
            <person name="Eisen J.A."/>
            <person name="Markowitz V."/>
            <person name="Hugenholtz P."/>
            <person name="Kyrpides N.C."/>
            <person name="Klenk H.P."/>
            <person name="Lapidus A."/>
        </authorList>
    </citation>
    <scope>NUCLEOTIDE SEQUENCE [LARGE SCALE GENOMIC DNA]</scope>
    <source>
        <strain>ATCC BAA-8 / DSM 12333 / CCUG 43141 / JCM 11478 / NBRC 16432 / NCIMB 13614 / HKI 0122</strain>
    </source>
</reference>
<comment type="function">
    <text evidence="1">Binds the 23S rRNA.</text>
</comment>
<comment type="cofactor">
    <cofactor evidence="1">
        <name>Zn(2+)</name>
        <dbReference type="ChEBI" id="CHEBI:29105"/>
    </cofactor>
    <text evidence="1">Binds 1 zinc ion per subunit.</text>
</comment>
<comment type="subunit">
    <text evidence="1">Part of the 50S ribosomal subunit.</text>
</comment>
<comment type="similarity">
    <text evidence="1">Belongs to the bacterial ribosomal protein bL31 family. Type A subfamily.</text>
</comment>
<proteinExistence type="inferred from homology"/>
<sequence>MKSGIHPTYVTTTVTCTCGSTFTTRSTAASGQIHADVCSACHPFYTGKQKILDTGGRVARFEARYGKRTPAN</sequence>
<feature type="chain" id="PRO_1000206515" description="Large ribosomal subunit protein bL31">
    <location>
        <begin position="1"/>
        <end position="72"/>
    </location>
</feature>
<feature type="binding site" evidence="1">
    <location>
        <position position="16"/>
    </location>
    <ligand>
        <name>Zn(2+)</name>
        <dbReference type="ChEBI" id="CHEBI:29105"/>
    </ligand>
</feature>
<feature type="binding site" evidence="1">
    <location>
        <position position="18"/>
    </location>
    <ligand>
        <name>Zn(2+)</name>
        <dbReference type="ChEBI" id="CHEBI:29105"/>
    </ligand>
</feature>
<feature type="binding site" evidence="1">
    <location>
        <position position="38"/>
    </location>
    <ligand>
        <name>Zn(2+)</name>
        <dbReference type="ChEBI" id="CHEBI:29105"/>
    </ligand>
</feature>
<feature type="binding site" evidence="1">
    <location>
        <position position="41"/>
    </location>
    <ligand>
        <name>Zn(2+)</name>
        <dbReference type="ChEBI" id="CHEBI:29105"/>
    </ligand>
</feature>